<keyword id="KW-0007">Acetylation</keyword>
<keyword id="KW-0025">Alternative splicing</keyword>
<keyword id="KW-0472">Membrane</keyword>
<keyword id="KW-1185">Reference proteome</keyword>
<keyword id="KW-0812">Transmembrane</keyword>
<keyword id="KW-1133">Transmembrane helix</keyword>
<keyword id="KW-0813">Transport</keyword>
<feature type="initiator methionine" description="Removed" evidence="6">
    <location>
        <position position="1"/>
    </location>
</feature>
<feature type="chain" id="PRO_0000434062" description="Protein DETOXIFICATION 21">
    <location>
        <begin position="2"/>
        <end position="494"/>
    </location>
</feature>
<feature type="transmembrane region" description="Helical" evidence="1">
    <location>
        <begin position="40"/>
        <end position="60"/>
    </location>
</feature>
<feature type="transmembrane region" description="Helical" evidence="1">
    <location>
        <begin position="73"/>
        <end position="95"/>
    </location>
</feature>
<feature type="transmembrane region" description="Helical" evidence="1">
    <location>
        <begin position="123"/>
        <end position="143"/>
    </location>
</feature>
<feature type="transmembrane region" description="Helical" evidence="1">
    <location>
        <begin position="158"/>
        <end position="178"/>
    </location>
</feature>
<feature type="transmembrane region" description="Helical" evidence="1">
    <location>
        <begin position="188"/>
        <end position="208"/>
    </location>
</feature>
<feature type="transmembrane region" description="Helical" evidence="1">
    <location>
        <begin position="217"/>
        <end position="237"/>
    </location>
</feature>
<feature type="transmembrane region" description="Helical" evidence="1">
    <location>
        <begin position="268"/>
        <end position="288"/>
    </location>
</feature>
<feature type="transmembrane region" description="Helical" evidence="1">
    <location>
        <begin position="297"/>
        <end position="317"/>
    </location>
</feature>
<feature type="transmembrane region" description="Helical" evidence="1">
    <location>
        <begin position="340"/>
        <end position="360"/>
    </location>
</feature>
<feature type="transmembrane region" description="Helical" evidence="1">
    <location>
        <begin position="384"/>
        <end position="404"/>
    </location>
</feature>
<feature type="transmembrane region" description="Helical" evidence="1">
    <location>
        <begin position="416"/>
        <end position="436"/>
    </location>
</feature>
<feature type="transmembrane region" description="Helical" evidence="1">
    <location>
        <begin position="441"/>
        <end position="461"/>
    </location>
</feature>
<feature type="modified residue" description="N-acetylalanine" evidence="6">
    <location>
        <position position="2"/>
    </location>
</feature>
<proteinExistence type="evidence at protein level"/>
<comment type="subcellular location">
    <subcellularLocation>
        <location evidence="1">Membrane</location>
        <topology evidence="1">Multi-pass membrane protein</topology>
    </subcellularLocation>
</comment>
<comment type="alternative products">
    <event type="alternative splicing"/>
    <isoform>
        <id>Q8W488-1</id>
        <name>1</name>
        <sequence type="displayed"/>
    </isoform>
    <text>A number of isoforms are produced. According to EST sequences.</text>
</comment>
<comment type="similarity">
    <text evidence="3">Belongs to the multi antimicrobial extrusion (MATE) (TC 2.A.66.1) family.</text>
</comment>
<comment type="sequence caution" evidence="3">
    <conflict type="erroneous gene model prediction">
        <sequence resource="EMBL-CDS" id="AAF97344"/>
    </conflict>
</comment>
<sequence>MAGGGGELTAALLKKTAENGGEEKDELGLKQKVWIESKKLWIVAAPAIFTRFSTFGVSIISQSFIGHLGPIELAAYSITFTVLLRFSNGILLGMASALETLCGQAYGAKQNHMLGIYLQRSWIVLTGCTICLTPVYIFSGPILLALGQEERIVRVARIIALWVIGINFSFVPSFTCQMFLQAQSKNKIIAYVAAVSLGVHVFLSWLLMVHFNFGITGAMTSTLVAFWLPNIAQLLFVTCGGCKDTWRGFSMMAFKDLWPVFKLSMSSGGMLCLELWYNSILVLLTGNLKNAEVALDALAICLNINGLEMMIALGFLAAASVRVSNELGSGNPKGAKFATLTAVFTSLSLGIVLFFVFLFLRGRVSYIFTTSEAVAAEVADLSPLLAFSILMNSVQPVLSGVAVGAGWQGYVTYVNLACYYLVGIPIGIILGYVVGLQVKGVWIGMLFGIFVQTCVLTVMTLRTDWDQQVSTSLRRLNRWVVPESRDVNQVSSEE</sequence>
<organism>
    <name type="scientific">Arabidopsis thaliana</name>
    <name type="common">Mouse-ear cress</name>
    <dbReference type="NCBI Taxonomy" id="3702"/>
    <lineage>
        <taxon>Eukaryota</taxon>
        <taxon>Viridiplantae</taxon>
        <taxon>Streptophyta</taxon>
        <taxon>Embryophyta</taxon>
        <taxon>Tracheophyta</taxon>
        <taxon>Spermatophyta</taxon>
        <taxon>Magnoliopsida</taxon>
        <taxon>eudicotyledons</taxon>
        <taxon>Gunneridae</taxon>
        <taxon>Pentapetalae</taxon>
        <taxon>rosids</taxon>
        <taxon>malvids</taxon>
        <taxon>Brassicales</taxon>
        <taxon>Brassicaceae</taxon>
        <taxon>Camelineae</taxon>
        <taxon>Arabidopsis</taxon>
    </lineage>
</organism>
<evidence type="ECO:0000255" key="1"/>
<evidence type="ECO:0000303" key="2">
    <source>
    </source>
</evidence>
<evidence type="ECO:0000305" key="3"/>
<evidence type="ECO:0000312" key="4">
    <source>
        <dbReference type="Araport" id="AT1G33110"/>
    </source>
</evidence>
<evidence type="ECO:0000312" key="5">
    <source>
        <dbReference type="EMBL" id="AAF97344.1"/>
    </source>
</evidence>
<evidence type="ECO:0007744" key="6">
    <source>
    </source>
</evidence>
<gene>
    <name evidence="2" type="primary">DTX21</name>
    <name evidence="4" type="ordered locus">At1g33110</name>
    <name evidence="5" type="ORF">T9L6.1</name>
</gene>
<reference key="1">
    <citation type="journal article" date="2000" name="Nature">
        <title>Sequence and analysis of chromosome 1 of the plant Arabidopsis thaliana.</title>
        <authorList>
            <person name="Theologis A."/>
            <person name="Ecker J.R."/>
            <person name="Palm C.J."/>
            <person name="Federspiel N.A."/>
            <person name="Kaul S."/>
            <person name="White O."/>
            <person name="Alonso J."/>
            <person name="Altafi H."/>
            <person name="Araujo R."/>
            <person name="Bowman C.L."/>
            <person name="Brooks S.Y."/>
            <person name="Buehler E."/>
            <person name="Chan A."/>
            <person name="Chao Q."/>
            <person name="Chen H."/>
            <person name="Cheuk R.F."/>
            <person name="Chin C.W."/>
            <person name="Chung M.K."/>
            <person name="Conn L."/>
            <person name="Conway A.B."/>
            <person name="Conway A.R."/>
            <person name="Creasy T.H."/>
            <person name="Dewar K."/>
            <person name="Dunn P."/>
            <person name="Etgu P."/>
            <person name="Feldblyum T.V."/>
            <person name="Feng J.-D."/>
            <person name="Fong B."/>
            <person name="Fujii C.Y."/>
            <person name="Gill J.E."/>
            <person name="Goldsmith A.D."/>
            <person name="Haas B."/>
            <person name="Hansen N.F."/>
            <person name="Hughes B."/>
            <person name="Huizar L."/>
            <person name="Hunter J.L."/>
            <person name="Jenkins J."/>
            <person name="Johnson-Hopson C."/>
            <person name="Khan S."/>
            <person name="Khaykin E."/>
            <person name="Kim C.J."/>
            <person name="Koo H.L."/>
            <person name="Kremenetskaia I."/>
            <person name="Kurtz D.B."/>
            <person name="Kwan A."/>
            <person name="Lam B."/>
            <person name="Langin-Hooper S."/>
            <person name="Lee A."/>
            <person name="Lee J.M."/>
            <person name="Lenz C.A."/>
            <person name="Li J.H."/>
            <person name="Li Y.-P."/>
            <person name="Lin X."/>
            <person name="Liu S.X."/>
            <person name="Liu Z.A."/>
            <person name="Luros J.S."/>
            <person name="Maiti R."/>
            <person name="Marziali A."/>
            <person name="Militscher J."/>
            <person name="Miranda M."/>
            <person name="Nguyen M."/>
            <person name="Nierman W.C."/>
            <person name="Osborne B.I."/>
            <person name="Pai G."/>
            <person name="Peterson J."/>
            <person name="Pham P.K."/>
            <person name="Rizzo M."/>
            <person name="Rooney T."/>
            <person name="Rowley D."/>
            <person name="Sakano H."/>
            <person name="Salzberg S.L."/>
            <person name="Schwartz J.R."/>
            <person name="Shinn P."/>
            <person name="Southwick A.M."/>
            <person name="Sun H."/>
            <person name="Tallon L.J."/>
            <person name="Tambunga G."/>
            <person name="Toriumi M.J."/>
            <person name="Town C.D."/>
            <person name="Utterback T."/>
            <person name="Van Aken S."/>
            <person name="Vaysberg M."/>
            <person name="Vysotskaia V.S."/>
            <person name="Walker M."/>
            <person name="Wu D."/>
            <person name="Yu G."/>
            <person name="Fraser C.M."/>
            <person name="Venter J.C."/>
            <person name="Davis R.W."/>
        </authorList>
    </citation>
    <scope>NUCLEOTIDE SEQUENCE [LARGE SCALE GENOMIC DNA]</scope>
    <source>
        <strain>cv. Columbia</strain>
    </source>
</reference>
<reference key="2">
    <citation type="journal article" date="2017" name="Plant J.">
        <title>Araport11: a complete reannotation of the Arabidopsis thaliana reference genome.</title>
        <authorList>
            <person name="Cheng C.Y."/>
            <person name="Krishnakumar V."/>
            <person name="Chan A.P."/>
            <person name="Thibaud-Nissen F."/>
            <person name="Schobel S."/>
            <person name="Town C.D."/>
        </authorList>
    </citation>
    <scope>GENOME REANNOTATION</scope>
    <source>
        <strain>cv. Columbia</strain>
    </source>
</reference>
<reference key="3">
    <citation type="journal article" date="2003" name="Science">
        <title>Empirical analysis of transcriptional activity in the Arabidopsis genome.</title>
        <authorList>
            <person name="Yamada K."/>
            <person name="Lim J."/>
            <person name="Dale J.M."/>
            <person name="Chen H."/>
            <person name="Shinn P."/>
            <person name="Palm C.J."/>
            <person name="Southwick A.M."/>
            <person name="Wu H.C."/>
            <person name="Kim C.J."/>
            <person name="Nguyen M."/>
            <person name="Pham P.K."/>
            <person name="Cheuk R.F."/>
            <person name="Karlin-Newmann G."/>
            <person name="Liu S.X."/>
            <person name="Lam B."/>
            <person name="Sakano H."/>
            <person name="Wu T."/>
            <person name="Yu G."/>
            <person name="Miranda M."/>
            <person name="Quach H.L."/>
            <person name="Tripp M."/>
            <person name="Chang C.H."/>
            <person name="Lee J.M."/>
            <person name="Toriumi M.J."/>
            <person name="Chan M.M."/>
            <person name="Tang C.C."/>
            <person name="Onodera C.S."/>
            <person name="Deng J.M."/>
            <person name="Akiyama K."/>
            <person name="Ansari Y."/>
            <person name="Arakawa T."/>
            <person name="Banh J."/>
            <person name="Banno F."/>
            <person name="Bowser L."/>
            <person name="Brooks S.Y."/>
            <person name="Carninci P."/>
            <person name="Chao Q."/>
            <person name="Choy N."/>
            <person name="Enju A."/>
            <person name="Goldsmith A.D."/>
            <person name="Gurjal M."/>
            <person name="Hansen N.F."/>
            <person name="Hayashizaki Y."/>
            <person name="Johnson-Hopson C."/>
            <person name="Hsuan V.W."/>
            <person name="Iida K."/>
            <person name="Karnes M."/>
            <person name="Khan S."/>
            <person name="Koesema E."/>
            <person name="Ishida J."/>
            <person name="Jiang P.X."/>
            <person name="Jones T."/>
            <person name="Kawai J."/>
            <person name="Kamiya A."/>
            <person name="Meyers C."/>
            <person name="Nakajima M."/>
            <person name="Narusaka M."/>
            <person name="Seki M."/>
            <person name="Sakurai T."/>
            <person name="Satou M."/>
            <person name="Tamse R."/>
            <person name="Vaysberg M."/>
            <person name="Wallender E.K."/>
            <person name="Wong C."/>
            <person name="Yamamura Y."/>
            <person name="Yuan S."/>
            <person name="Shinozaki K."/>
            <person name="Davis R.W."/>
            <person name="Theologis A."/>
            <person name="Ecker J.R."/>
        </authorList>
    </citation>
    <scope>NUCLEOTIDE SEQUENCE [LARGE SCALE MRNA]</scope>
    <source>
        <strain>cv. Columbia</strain>
    </source>
</reference>
<reference key="4">
    <citation type="journal article" date="2002" name="J. Biol. Chem.">
        <title>Functional cloning and characterization of a plant efflux carrier for multidrug and heavy metal detoxification.</title>
        <authorList>
            <person name="Li L."/>
            <person name="He Z."/>
            <person name="Pandey G.K."/>
            <person name="Tsuchiya T."/>
            <person name="Luan S."/>
        </authorList>
    </citation>
    <scope>GENE FAMILY</scope>
    <scope>NOMENCLATURE</scope>
</reference>
<reference key="5">
    <citation type="journal article" date="2003" name="Eur. J. Biochem.">
        <title>The multidrug/oligosaccharidyl-lipid/polysaccharide (MOP) exporter superfamily.</title>
        <authorList>
            <person name="Hvorup R.N."/>
            <person name="Winnen B."/>
            <person name="Chang A.B."/>
            <person name="Jiang Y."/>
            <person name="Zhou X.F."/>
            <person name="Saier M.H. Jr."/>
        </authorList>
    </citation>
    <scope>GENE FAMILY</scope>
</reference>
<reference key="6">
    <citation type="journal article" date="2012" name="Mol. Cell. Proteomics">
        <title>Comparative large-scale characterisation of plant vs. mammal proteins reveals similar and idiosyncratic N-alpha acetylation features.</title>
        <authorList>
            <person name="Bienvenut W.V."/>
            <person name="Sumpton D."/>
            <person name="Martinez A."/>
            <person name="Lilla S."/>
            <person name="Espagne C."/>
            <person name="Meinnel T."/>
            <person name="Giglione C."/>
        </authorList>
    </citation>
    <scope>ACETYLATION [LARGE SCALE ANALYSIS] AT ALA-2</scope>
    <scope>CLEAVAGE OF INITIATOR METHIONINE [LARGE SCALE ANALYSIS]</scope>
    <scope>IDENTIFICATION BY MASS SPECTROMETRY [LARGE SCALE ANALYSIS]</scope>
</reference>
<name>DTX21_ARATH</name>
<dbReference type="EMBL" id="AC021045">
    <property type="protein sequence ID" value="AAF97344.1"/>
    <property type="status" value="ALT_SEQ"/>
    <property type="molecule type" value="Genomic_DNA"/>
</dbReference>
<dbReference type="EMBL" id="CP002684">
    <property type="protein sequence ID" value="AEE31566.1"/>
    <property type="molecule type" value="Genomic_DNA"/>
</dbReference>
<dbReference type="EMBL" id="AY062756">
    <property type="protein sequence ID" value="AAL32834.1"/>
    <property type="molecule type" value="mRNA"/>
</dbReference>
<dbReference type="EMBL" id="AY114687">
    <property type="protein sequence ID" value="AAM48006.1"/>
    <property type="molecule type" value="mRNA"/>
</dbReference>
<dbReference type="PIR" id="B86455">
    <property type="entry name" value="B86455"/>
</dbReference>
<dbReference type="RefSeq" id="NP_174587.1">
    <molecule id="Q8W488-1"/>
    <property type="nucleotide sequence ID" value="NM_103045.6"/>
</dbReference>
<dbReference type="SMR" id="Q8W488"/>
<dbReference type="FunCoup" id="Q8W488">
    <property type="interactions" value="2"/>
</dbReference>
<dbReference type="IntAct" id="Q8W488">
    <property type="interactions" value="5"/>
</dbReference>
<dbReference type="STRING" id="3702.Q8W488"/>
<dbReference type="iPTMnet" id="Q8W488"/>
<dbReference type="PaxDb" id="3702-AT1G33110.1"/>
<dbReference type="ProteomicsDB" id="222188">
    <molecule id="Q8W488-1"/>
</dbReference>
<dbReference type="EnsemblPlants" id="AT1G33110.1">
    <molecule id="Q8W488-1"/>
    <property type="protein sequence ID" value="AT1G33110.1"/>
    <property type="gene ID" value="AT1G33110"/>
</dbReference>
<dbReference type="GeneID" id="840207"/>
<dbReference type="Gramene" id="AT1G33110.1">
    <molecule id="Q8W488-1"/>
    <property type="protein sequence ID" value="AT1G33110.1"/>
    <property type="gene ID" value="AT1G33110"/>
</dbReference>
<dbReference type="KEGG" id="ath:AT1G33110"/>
<dbReference type="Araport" id="AT1G33110"/>
<dbReference type="TAIR" id="AT1G33110"/>
<dbReference type="eggNOG" id="KOG1347">
    <property type="taxonomic scope" value="Eukaryota"/>
</dbReference>
<dbReference type="HOGENOM" id="CLU_012893_1_4_1"/>
<dbReference type="InParanoid" id="Q8W488"/>
<dbReference type="OMA" id="KTMWVVA"/>
<dbReference type="PhylomeDB" id="Q8W488"/>
<dbReference type="PRO" id="PR:Q8W488"/>
<dbReference type="Proteomes" id="UP000006548">
    <property type="component" value="Chromosome 1"/>
</dbReference>
<dbReference type="ExpressionAtlas" id="Q8W488">
    <property type="expression patterns" value="baseline and differential"/>
</dbReference>
<dbReference type="GO" id="GO:0016020">
    <property type="term" value="C:membrane"/>
    <property type="evidence" value="ECO:0007669"/>
    <property type="project" value="UniProtKB-SubCell"/>
</dbReference>
<dbReference type="GO" id="GO:0005634">
    <property type="term" value="C:nucleus"/>
    <property type="evidence" value="ECO:0007005"/>
    <property type="project" value="TAIR"/>
</dbReference>
<dbReference type="GO" id="GO:0015297">
    <property type="term" value="F:antiporter activity"/>
    <property type="evidence" value="ECO:0007669"/>
    <property type="project" value="InterPro"/>
</dbReference>
<dbReference type="GO" id="GO:0042910">
    <property type="term" value="F:xenobiotic transmembrane transporter activity"/>
    <property type="evidence" value="ECO:0007669"/>
    <property type="project" value="InterPro"/>
</dbReference>
<dbReference type="GO" id="GO:1990961">
    <property type="term" value="P:xenobiotic detoxification by transmembrane export across the plasma membrane"/>
    <property type="evidence" value="ECO:0007669"/>
    <property type="project" value="InterPro"/>
</dbReference>
<dbReference type="CDD" id="cd13132">
    <property type="entry name" value="MATE_eukaryotic"/>
    <property type="match status" value="1"/>
</dbReference>
<dbReference type="InterPro" id="IPR045069">
    <property type="entry name" value="MATE_euk"/>
</dbReference>
<dbReference type="InterPro" id="IPR002528">
    <property type="entry name" value="MATE_fam"/>
</dbReference>
<dbReference type="NCBIfam" id="TIGR00797">
    <property type="entry name" value="matE"/>
    <property type="match status" value="1"/>
</dbReference>
<dbReference type="PANTHER" id="PTHR11206">
    <property type="entry name" value="MULTIDRUG RESISTANCE PROTEIN"/>
    <property type="match status" value="1"/>
</dbReference>
<dbReference type="Pfam" id="PF01554">
    <property type="entry name" value="MatE"/>
    <property type="match status" value="2"/>
</dbReference>
<accession>Q8W488</accession>
<accession>Q9LP32</accession>
<protein>
    <recommendedName>
        <fullName evidence="2">Protein DETOXIFICATION 21</fullName>
        <shortName evidence="2">AtDTX21</shortName>
    </recommendedName>
    <alternativeName>
        <fullName evidence="3">Multidrug and toxic compound extrusion protein 21</fullName>
        <shortName evidence="3">MATE protein 21</shortName>
    </alternativeName>
</protein>